<evidence type="ECO:0000255" key="1">
    <source>
        <dbReference type="HAMAP-Rule" id="MF_00388"/>
    </source>
</evidence>
<accession>A7ZC65</accession>
<comment type="function">
    <text evidence="1">Catalyzes the hydrolysis of UDP-3-O-myristoyl-N-acetylglucosamine to form UDP-3-O-myristoylglucosamine and acetate, the committed step in lipid A biosynthesis.</text>
</comment>
<comment type="catalytic activity">
    <reaction evidence="1">
        <text>a UDP-3-O-[(3R)-3-hydroxyacyl]-N-acetyl-alpha-D-glucosamine + H2O = a UDP-3-O-[(3R)-3-hydroxyacyl]-alpha-D-glucosamine + acetate</text>
        <dbReference type="Rhea" id="RHEA:67816"/>
        <dbReference type="ChEBI" id="CHEBI:15377"/>
        <dbReference type="ChEBI" id="CHEBI:30089"/>
        <dbReference type="ChEBI" id="CHEBI:137740"/>
        <dbReference type="ChEBI" id="CHEBI:173225"/>
        <dbReference type="EC" id="3.5.1.108"/>
    </reaction>
</comment>
<comment type="cofactor">
    <cofactor evidence="1">
        <name>Zn(2+)</name>
        <dbReference type="ChEBI" id="CHEBI:29105"/>
    </cofactor>
</comment>
<comment type="pathway">
    <text evidence="1">Glycolipid biosynthesis; lipid IV(A) biosynthesis; lipid IV(A) from (3R)-3-hydroxytetradecanoyl-[acyl-carrier-protein] and UDP-N-acetyl-alpha-D-glucosamine: step 2/6.</text>
</comment>
<comment type="similarity">
    <text evidence="1">Belongs to the LpxC family.</text>
</comment>
<feature type="chain" id="PRO_1000013198" description="UDP-3-O-acyl-N-acetylglucosamine deacetylase">
    <location>
        <begin position="1"/>
        <end position="294"/>
    </location>
</feature>
<feature type="active site" description="Proton donor" evidence="1">
    <location>
        <position position="259"/>
    </location>
</feature>
<feature type="binding site" evidence="1">
    <location>
        <position position="75"/>
    </location>
    <ligand>
        <name>Zn(2+)</name>
        <dbReference type="ChEBI" id="CHEBI:29105"/>
    </ligand>
</feature>
<feature type="binding site" evidence="1">
    <location>
        <position position="232"/>
    </location>
    <ligand>
        <name>Zn(2+)</name>
        <dbReference type="ChEBI" id="CHEBI:29105"/>
    </ligand>
</feature>
<feature type="binding site" evidence="1">
    <location>
        <position position="236"/>
    </location>
    <ligand>
        <name>Zn(2+)</name>
        <dbReference type="ChEBI" id="CHEBI:29105"/>
    </ligand>
</feature>
<protein>
    <recommendedName>
        <fullName evidence="1">UDP-3-O-acyl-N-acetylglucosamine deacetylase</fullName>
        <shortName evidence="1">UDP-3-O-acyl-GlcNAc deacetylase</shortName>
        <ecNumber evidence="1">3.5.1.108</ecNumber>
    </recommendedName>
    <alternativeName>
        <fullName evidence="1">UDP-3-O-[R-3-hydroxymyristoyl]-N-acetylglucosamine deacetylase</fullName>
    </alternativeName>
</protein>
<dbReference type="EC" id="3.5.1.108" evidence="1"/>
<dbReference type="EMBL" id="CP000792">
    <property type="protein sequence ID" value="EAT97231.2"/>
    <property type="molecule type" value="Genomic_DNA"/>
</dbReference>
<dbReference type="RefSeq" id="WP_012001353.1">
    <property type="nucleotide sequence ID" value="NC_009802.2"/>
</dbReference>
<dbReference type="SMR" id="A7ZC65"/>
<dbReference type="STRING" id="360104.CCC13826_1297"/>
<dbReference type="KEGG" id="cco:CCC13826_1297"/>
<dbReference type="eggNOG" id="COG0774">
    <property type="taxonomic scope" value="Bacteria"/>
</dbReference>
<dbReference type="HOGENOM" id="CLU_046528_1_0_7"/>
<dbReference type="OrthoDB" id="9802746at2"/>
<dbReference type="UniPathway" id="UPA00359">
    <property type="reaction ID" value="UER00478"/>
</dbReference>
<dbReference type="Proteomes" id="UP000001121">
    <property type="component" value="Chromosome"/>
</dbReference>
<dbReference type="GO" id="GO:0016020">
    <property type="term" value="C:membrane"/>
    <property type="evidence" value="ECO:0007669"/>
    <property type="project" value="GOC"/>
</dbReference>
<dbReference type="GO" id="GO:0046872">
    <property type="term" value="F:metal ion binding"/>
    <property type="evidence" value="ECO:0007669"/>
    <property type="project" value="UniProtKB-KW"/>
</dbReference>
<dbReference type="GO" id="GO:0103117">
    <property type="term" value="F:UDP-3-O-acyl-N-acetylglucosamine deacetylase activity"/>
    <property type="evidence" value="ECO:0007669"/>
    <property type="project" value="UniProtKB-UniRule"/>
</dbReference>
<dbReference type="GO" id="GO:0009245">
    <property type="term" value="P:lipid A biosynthetic process"/>
    <property type="evidence" value="ECO:0007669"/>
    <property type="project" value="UniProtKB-UniRule"/>
</dbReference>
<dbReference type="Gene3D" id="3.30.230.20">
    <property type="entry name" value="lpxc deacetylase, domain 1"/>
    <property type="match status" value="1"/>
</dbReference>
<dbReference type="Gene3D" id="3.30.1700.10">
    <property type="entry name" value="lpxc deacetylase, domain 2"/>
    <property type="match status" value="1"/>
</dbReference>
<dbReference type="HAMAP" id="MF_00388">
    <property type="entry name" value="LpxC"/>
    <property type="match status" value="1"/>
</dbReference>
<dbReference type="InterPro" id="IPR020568">
    <property type="entry name" value="Ribosomal_Su5_D2-typ_SF"/>
</dbReference>
<dbReference type="InterPro" id="IPR004463">
    <property type="entry name" value="UDP-acyl_GlcNac_deAcase"/>
</dbReference>
<dbReference type="InterPro" id="IPR011334">
    <property type="entry name" value="UDP-acyl_GlcNac_deAcase_C"/>
</dbReference>
<dbReference type="InterPro" id="IPR015870">
    <property type="entry name" value="UDP-acyl_N-AcGlcN_deAcase_N"/>
</dbReference>
<dbReference type="NCBIfam" id="TIGR00325">
    <property type="entry name" value="lpxC"/>
    <property type="match status" value="1"/>
</dbReference>
<dbReference type="PANTHER" id="PTHR33694">
    <property type="entry name" value="UDP-3-O-ACYL-N-ACETYLGLUCOSAMINE DEACETYLASE 1, MITOCHONDRIAL-RELATED"/>
    <property type="match status" value="1"/>
</dbReference>
<dbReference type="PANTHER" id="PTHR33694:SF1">
    <property type="entry name" value="UDP-3-O-ACYL-N-ACETYLGLUCOSAMINE DEACETYLASE 1, MITOCHONDRIAL-RELATED"/>
    <property type="match status" value="1"/>
</dbReference>
<dbReference type="Pfam" id="PF03331">
    <property type="entry name" value="LpxC"/>
    <property type="match status" value="1"/>
</dbReference>
<dbReference type="SUPFAM" id="SSF54211">
    <property type="entry name" value="Ribosomal protein S5 domain 2-like"/>
    <property type="match status" value="2"/>
</dbReference>
<sequence length="294" mass="32587">MKQTTIARRVETVGIGLHKGEPIRLILEPLDANSGIILHREDLGISFKAEPKNVINTQMATVVGNEKGFISTIEHLMAAVNGYGIDNIRISVDANEIPVMDGSAISFCMLLDEAGIRHLDAGKKVILVRREVEVIEGSKFVRTSPSRNPKFDYTIKFDHPVIGEQRYLFEFSKSSFVKNIARARTFGFLKDLQRLQAQNLALGASLDNAVAIDDTHILNPEGLRFENEFVRHKILDAVGDLSLLGAPLLGDYTAFAGSHDLNHKLTLALMADEKNYEIATLSGELLKEYQKVFA</sequence>
<reference key="1">
    <citation type="submission" date="2007-10" db="EMBL/GenBank/DDBJ databases">
        <title>Genome sequence of Campylobacter concisus 13826 isolated from human feces.</title>
        <authorList>
            <person name="Fouts D.E."/>
            <person name="Mongodin E.F."/>
            <person name="Puiu D."/>
            <person name="Sebastian Y."/>
            <person name="Miller W.G."/>
            <person name="Mandrell R.E."/>
            <person name="On S."/>
            <person name="Nelson K.E."/>
        </authorList>
    </citation>
    <scope>NUCLEOTIDE SEQUENCE [LARGE SCALE GENOMIC DNA]</scope>
    <source>
        <strain>13826</strain>
    </source>
</reference>
<proteinExistence type="inferred from homology"/>
<gene>
    <name evidence="1" type="primary">lpxC</name>
    <name type="ordered locus">Ccon26_04720</name>
    <name type="ORF">CCC13826_1297</name>
</gene>
<name>LPXC_CAMC1</name>
<organism>
    <name type="scientific">Campylobacter concisus (strain 13826)</name>
    <dbReference type="NCBI Taxonomy" id="360104"/>
    <lineage>
        <taxon>Bacteria</taxon>
        <taxon>Pseudomonadati</taxon>
        <taxon>Campylobacterota</taxon>
        <taxon>Epsilonproteobacteria</taxon>
        <taxon>Campylobacterales</taxon>
        <taxon>Campylobacteraceae</taxon>
        <taxon>Campylobacter</taxon>
    </lineage>
</organism>
<keyword id="KW-0378">Hydrolase</keyword>
<keyword id="KW-0441">Lipid A biosynthesis</keyword>
<keyword id="KW-0444">Lipid biosynthesis</keyword>
<keyword id="KW-0443">Lipid metabolism</keyword>
<keyword id="KW-0479">Metal-binding</keyword>
<keyword id="KW-0862">Zinc</keyword>